<name>ERG24_HUMAN</name>
<protein>
    <recommendedName>
        <fullName>Delta(14)-sterol reductase TM7SF2</fullName>
        <shortName>Delta-14-SR</shortName>
        <ecNumber evidence="3">1.3.1.70</ecNumber>
    </recommendedName>
    <alternativeName>
        <fullName evidence="12">3-beta-hydroxysterol Delta (14)-reductase</fullName>
    </alternativeName>
    <alternativeName>
        <fullName>Another new gene 1 protein</fullName>
    </alternativeName>
    <alternativeName>
        <fullName>C-14 sterol reductase</fullName>
        <shortName evidence="12">C14SR</shortName>
    </alternativeName>
    <alternativeName>
        <fullName>Putative sterol reductase SR-1</fullName>
    </alternativeName>
    <alternativeName>
        <fullName>Sterol C14-reductase</fullName>
    </alternativeName>
    <alternativeName>
        <fullName>Transmembrane 7 superfamily member 2</fullName>
    </alternativeName>
</protein>
<gene>
    <name type="primary">TM7SF2</name>
    <name type="synonym">ANG1</name>
</gene>
<sequence length="418" mass="46406">MAPTQGPRAPLEFGGPLGAAALLLLLPATMFHLLLAARSGPARLLGPPASLPGLEVLWSPRALLLWLAWLGLQAALYLLPARKVAEGQELKDKSRLRYPINGFQALVLTALLVGLGMSAGLPLGALPEMLLPLAFVATLTAFIFSLFLYMKAQVAPVSALAPGGNSGNPIYDFFLGRELNPRICFFDFKYFCELRPGLIGWVLINLALLMKEAELRGSPSLAMWLVNGFQLLYVGDALWHEEAVLTTMDITHDGFGFMLAFGDMAWVPFTYSLQAQFLLHHPQPLGLPMASVICLINATGYYIFRGANSQKNTFRKNPSDPRVAGLETISTATGRKLLVSGWWGMVRHPNYLGDLIMALAWSLPCGVSHLLPYFYLLYFTALLVHREARDERQCLQKYGLAWQEYCRRVPYRIMPYIY</sequence>
<feature type="chain" id="PRO_0000207500" description="Delta(14)-sterol reductase TM7SF2">
    <location>
        <begin position="1"/>
        <end position="418"/>
    </location>
</feature>
<feature type="transmembrane region" description="Helical" evidence="4">
    <location>
        <begin position="13"/>
        <end position="35"/>
    </location>
</feature>
<feature type="transmembrane region" description="Helical" evidence="4">
    <location>
        <begin position="62"/>
        <end position="81"/>
    </location>
</feature>
<feature type="transmembrane region" description="Helical" evidence="4">
    <location>
        <begin position="102"/>
        <end position="124"/>
    </location>
</feature>
<feature type="transmembrane region" description="Helical" evidence="4">
    <location>
        <begin position="129"/>
        <end position="148"/>
    </location>
</feature>
<feature type="transmembrane region" description="Helical" evidence="4">
    <location>
        <begin position="255"/>
        <end position="277"/>
    </location>
</feature>
<feature type="transmembrane region" description="Helical" evidence="4">
    <location>
        <begin position="287"/>
        <end position="304"/>
    </location>
</feature>
<feature type="transmembrane region" description="Helical" evidence="4">
    <location>
        <begin position="355"/>
        <end position="377"/>
    </location>
</feature>
<feature type="binding site" evidence="1">
    <location>
        <position position="311"/>
    </location>
    <ligand>
        <name>NADP(+)</name>
        <dbReference type="ChEBI" id="CHEBI:58349"/>
    </ligand>
</feature>
<feature type="binding site" evidence="1">
    <location>
        <position position="315"/>
    </location>
    <ligand>
        <name>NADP(+)</name>
        <dbReference type="ChEBI" id="CHEBI:58349"/>
    </ligand>
</feature>
<feature type="binding site" evidence="1">
    <location>
        <position position="338"/>
    </location>
    <ligand>
        <name>NADP(+)</name>
        <dbReference type="ChEBI" id="CHEBI:58349"/>
    </ligand>
</feature>
<feature type="binding site" evidence="1">
    <location>
        <position position="343"/>
    </location>
    <ligand>
        <name>NADP(+)</name>
        <dbReference type="ChEBI" id="CHEBI:58349"/>
    </ligand>
</feature>
<feature type="binding site" evidence="1">
    <location>
        <begin position="350"/>
        <end position="351"/>
    </location>
    <ligand>
        <name>NADP(+)</name>
        <dbReference type="ChEBI" id="CHEBI:58349"/>
    </ligand>
</feature>
<feature type="binding site" evidence="1">
    <location>
        <position position="390"/>
    </location>
    <ligand>
        <name>NADP(+)</name>
        <dbReference type="ChEBI" id="CHEBI:58349"/>
    </ligand>
</feature>
<feature type="binding site" evidence="1">
    <location>
        <begin position="394"/>
        <end position="398"/>
    </location>
    <ligand>
        <name>NADP(+)</name>
        <dbReference type="ChEBI" id="CHEBI:58349"/>
    </ligand>
</feature>
<feature type="binding site" evidence="1">
    <location>
        <position position="405"/>
    </location>
    <ligand>
        <name>NADP(+)</name>
        <dbReference type="ChEBI" id="CHEBI:58349"/>
    </ligand>
</feature>
<feature type="splice variant" id="VSP_017898" description="In isoform 2." evidence="11">
    <location>
        <begin position="298"/>
        <end position="324"/>
    </location>
</feature>
<feature type="sequence variant" id="VAR_052153" description="In dbSNP:rs11539360.">
    <original>A</original>
    <variation>V</variation>
    <location>
        <position position="119"/>
    </location>
</feature>
<feature type="sequence variant" id="VAR_012716" description="In dbSNP:rs1129195." evidence="5 6 9 10">
    <original>T</original>
    <variation>I</variation>
    <location>
        <position position="299"/>
    </location>
</feature>
<feature type="sequence conflict" description="In Ref. 5; AAH12857." evidence="13" ref="5">
    <original>L</original>
    <variation>V</variation>
    <location>
        <position position="179"/>
    </location>
</feature>
<feature type="sequence conflict" description="In Ref. 5; AAH38353." evidence="13" ref="5">
    <original>V</original>
    <variation>A</variation>
    <location>
        <position position="409"/>
    </location>
</feature>
<dbReference type="EC" id="1.3.1.70" evidence="3"/>
<dbReference type="EMBL" id="AF048704">
    <property type="protein sequence ID" value="AAC21457.1"/>
    <property type="status" value="ALT_FRAME"/>
    <property type="molecule type" value="Genomic_DNA"/>
</dbReference>
<dbReference type="EMBL" id="AF023676">
    <property type="protein sequence ID" value="AAC21450.1"/>
    <property type="status" value="ALT_FRAME"/>
    <property type="molecule type" value="mRNA"/>
</dbReference>
<dbReference type="EMBL" id="AF096303">
    <property type="protein sequence ID" value="AAD09769.1"/>
    <property type="molecule type" value="Genomic_DNA"/>
</dbReference>
<dbReference type="EMBL" id="AF096304">
    <property type="protein sequence ID" value="AAD09765.1"/>
    <property type="molecule type" value="mRNA"/>
</dbReference>
<dbReference type="EMBL" id="AK290935">
    <property type="protein sequence ID" value="BAF83624.1"/>
    <property type="molecule type" value="mRNA"/>
</dbReference>
<dbReference type="EMBL" id="BC009052">
    <property type="protein sequence ID" value="AAH09052.1"/>
    <property type="molecule type" value="mRNA"/>
</dbReference>
<dbReference type="EMBL" id="BC012857">
    <property type="protein sequence ID" value="AAH12857.1"/>
    <property type="molecule type" value="mRNA"/>
</dbReference>
<dbReference type="EMBL" id="BC038353">
    <property type="protein sequence ID" value="AAH38353.1"/>
    <property type="molecule type" value="mRNA"/>
</dbReference>
<dbReference type="CCDS" id="CCDS41669.1">
    <molecule id="O76062-1"/>
</dbReference>
<dbReference type="CCDS" id="CCDS60846.1">
    <molecule id="O76062-2"/>
</dbReference>
<dbReference type="RefSeq" id="NP_001264162.1">
    <molecule id="O76062-2"/>
    <property type="nucleotide sequence ID" value="NM_001277233.2"/>
</dbReference>
<dbReference type="RefSeq" id="NP_003264.2">
    <molecule id="O76062-1"/>
    <property type="nucleotide sequence ID" value="NM_003273.6"/>
</dbReference>
<dbReference type="SMR" id="O76062"/>
<dbReference type="BioGRID" id="112963">
    <property type="interactions" value="14"/>
</dbReference>
<dbReference type="FunCoup" id="O76062">
    <property type="interactions" value="511"/>
</dbReference>
<dbReference type="IntAct" id="O76062">
    <property type="interactions" value="8"/>
</dbReference>
<dbReference type="MINT" id="O76062"/>
<dbReference type="STRING" id="9606.ENSP00000279263"/>
<dbReference type="ChEMBL" id="CHEMBL5839"/>
<dbReference type="SwissLipids" id="SLP:000001237"/>
<dbReference type="iPTMnet" id="O76062"/>
<dbReference type="PhosphoSitePlus" id="O76062"/>
<dbReference type="SwissPalm" id="O76062"/>
<dbReference type="BioMuta" id="TM7SF2"/>
<dbReference type="jPOST" id="O76062"/>
<dbReference type="MassIVE" id="O76062"/>
<dbReference type="PaxDb" id="9606-ENSP00000279263"/>
<dbReference type="PeptideAtlas" id="O76062"/>
<dbReference type="ProteomicsDB" id="50368">
    <molecule id="O76062-1"/>
</dbReference>
<dbReference type="ProteomicsDB" id="50369">
    <molecule id="O76062-2"/>
</dbReference>
<dbReference type="Pumba" id="O76062"/>
<dbReference type="Antibodypedia" id="29654">
    <property type="antibodies" value="120 antibodies from 24 providers"/>
</dbReference>
<dbReference type="DNASU" id="7108"/>
<dbReference type="Ensembl" id="ENST00000279263.14">
    <molecule id="O76062-1"/>
    <property type="protein sequence ID" value="ENSP00000279263.7"/>
    <property type="gene ID" value="ENSG00000149809.17"/>
</dbReference>
<dbReference type="Ensembl" id="ENST00000345348.9">
    <molecule id="O76062-2"/>
    <property type="protein sequence ID" value="ENSP00000329520.6"/>
    <property type="gene ID" value="ENSG00000149809.17"/>
</dbReference>
<dbReference type="GeneID" id="7108"/>
<dbReference type="KEGG" id="hsa:7108"/>
<dbReference type="MANE-Select" id="ENST00000279263.14">
    <property type="protein sequence ID" value="ENSP00000279263.7"/>
    <property type="RefSeq nucleotide sequence ID" value="NM_003273.6"/>
    <property type="RefSeq protein sequence ID" value="NP_003264.2"/>
</dbReference>
<dbReference type="UCSC" id="uc001oct.5">
    <molecule id="O76062-1"/>
    <property type="organism name" value="human"/>
</dbReference>
<dbReference type="AGR" id="HGNC:11863"/>
<dbReference type="CTD" id="7108"/>
<dbReference type="DisGeNET" id="7108"/>
<dbReference type="GeneCards" id="TM7SF2"/>
<dbReference type="HGNC" id="HGNC:11863">
    <property type="gene designation" value="TM7SF2"/>
</dbReference>
<dbReference type="HPA" id="ENSG00000149809">
    <property type="expression patterns" value="Tissue enhanced (adrenal)"/>
</dbReference>
<dbReference type="MIM" id="603414">
    <property type="type" value="gene"/>
</dbReference>
<dbReference type="neXtProt" id="NX_O76062"/>
<dbReference type="OpenTargets" id="ENSG00000149809"/>
<dbReference type="PharmGKB" id="PA36564"/>
<dbReference type="VEuPathDB" id="HostDB:ENSG00000149809"/>
<dbReference type="eggNOG" id="KOG1435">
    <property type="taxonomic scope" value="Eukaryota"/>
</dbReference>
<dbReference type="GeneTree" id="ENSGT00390000000417"/>
<dbReference type="HOGENOM" id="CLU_015631_0_3_1"/>
<dbReference type="InParanoid" id="O76062"/>
<dbReference type="OMA" id="EWCELRP"/>
<dbReference type="OrthoDB" id="5326588at2759"/>
<dbReference type="PAN-GO" id="O76062">
    <property type="GO annotations" value="4 GO annotations based on evolutionary models"/>
</dbReference>
<dbReference type="PhylomeDB" id="O76062"/>
<dbReference type="TreeFam" id="TF101179"/>
<dbReference type="BRENDA" id="1.3.1.70">
    <property type="organism ID" value="2681"/>
</dbReference>
<dbReference type="PathwayCommons" id="O76062"/>
<dbReference type="Reactome" id="R-HSA-191273">
    <property type="pathway name" value="Cholesterol biosynthesis"/>
</dbReference>
<dbReference type="Reactome" id="R-HSA-2426168">
    <property type="pathway name" value="Activation of gene expression by SREBF (SREBP)"/>
</dbReference>
<dbReference type="SignaLink" id="O76062"/>
<dbReference type="UniPathway" id="UPA00063"/>
<dbReference type="BioGRID-ORCS" id="7108">
    <property type="hits" value="133 hits in 1155 CRISPR screens"/>
</dbReference>
<dbReference type="ChiTaRS" id="TM7SF2">
    <property type="organism name" value="human"/>
</dbReference>
<dbReference type="GeneWiki" id="TM7SF2"/>
<dbReference type="GenomeRNAi" id="7108"/>
<dbReference type="Pharos" id="O76062">
    <property type="development level" value="Tbio"/>
</dbReference>
<dbReference type="PRO" id="PR:O76062"/>
<dbReference type="Proteomes" id="UP000005640">
    <property type="component" value="Chromosome 11"/>
</dbReference>
<dbReference type="RNAct" id="O76062">
    <property type="molecule type" value="protein"/>
</dbReference>
<dbReference type="Bgee" id="ENSG00000149809">
    <property type="expression patterns" value="Expressed in right adrenal gland cortex and 180 other cell types or tissues"/>
</dbReference>
<dbReference type="ExpressionAtlas" id="O76062">
    <property type="expression patterns" value="baseline and differential"/>
</dbReference>
<dbReference type="GO" id="GO:0005783">
    <property type="term" value="C:endoplasmic reticulum"/>
    <property type="evidence" value="ECO:0000314"/>
    <property type="project" value="HPA"/>
</dbReference>
<dbReference type="GO" id="GO:0005789">
    <property type="term" value="C:endoplasmic reticulum membrane"/>
    <property type="evidence" value="ECO:0000314"/>
    <property type="project" value="UniProt"/>
</dbReference>
<dbReference type="GO" id="GO:0043231">
    <property type="term" value="C:intracellular membrane-bounded organelle"/>
    <property type="evidence" value="ECO:0000314"/>
    <property type="project" value="HPA"/>
</dbReference>
<dbReference type="GO" id="GO:0005637">
    <property type="term" value="C:nuclear inner membrane"/>
    <property type="evidence" value="ECO:0000318"/>
    <property type="project" value="GO_Central"/>
</dbReference>
<dbReference type="GO" id="GO:0005886">
    <property type="term" value="C:plasma membrane"/>
    <property type="evidence" value="ECO:0000304"/>
    <property type="project" value="ProtInc"/>
</dbReference>
<dbReference type="GO" id="GO:0043235">
    <property type="term" value="C:receptor complex"/>
    <property type="evidence" value="ECO:0000314"/>
    <property type="project" value="MGI"/>
</dbReference>
<dbReference type="GO" id="GO:0050613">
    <property type="term" value="F:Delta14-sterol reductase activity"/>
    <property type="evidence" value="ECO:0000314"/>
    <property type="project" value="UniProtKB"/>
</dbReference>
<dbReference type="GO" id="GO:0050661">
    <property type="term" value="F:NADP binding"/>
    <property type="evidence" value="ECO:0000250"/>
    <property type="project" value="UniProtKB"/>
</dbReference>
<dbReference type="GO" id="GO:0006695">
    <property type="term" value="P:cholesterol biosynthetic process"/>
    <property type="evidence" value="ECO:0000314"/>
    <property type="project" value="UniProtKB"/>
</dbReference>
<dbReference type="FunFam" id="1.20.120.1630:FF:000001">
    <property type="entry name" value="delta(14)-sterol reductase isoform X1"/>
    <property type="match status" value="1"/>
</dbReference>
<dbReference type="Gene3D" id="1.20.120.1630">
    <property type="match status" value="1"/>
</dbReference>
<dbReference type="InterPro" id="IPR001171">
    <property type="entry name" value="ERG24_DHCR-like"/>
</dbReference>
<dbReference type="InterPro" id="IPR018083">
    <property type="entry name" value="Sterol_reductase_CS"/>
</dbReference>
<dbReference type="PANTHER" id="PTHR21257">
    <property type="entry name" value="DELTA(14)-STEROL REDUCTASE"/>
    <property type="match status" value="1"/>
</dbReference>
<dbReference type="PANTHER" id="PTHR21257:SF52">
    <property type="entry name" value="DELTA(14)-STEROL REDUCTASE TM7SF2"/>
    <property type="match status" value="1"/>
</dbReference>
<dbReference type="Pfam" id="PF01222">
    <property type="entry name" value="ERG4_ERG24"/>
    <property type="match status" value="1"/>
</dbReference>
<dbReference type="PROSITE" id="PS01017">
    <property type="entry name" value="STEROL_REDUCT_1"/>
    <property type="match status" value="1"/>
</dbReference>
<dbReference type="PROSITE" id="PS01018">
    <property type="entry name" value="STEROL_REDUCT_2"/>
    <property type="match status" value="1"/>
</dbReference>
<proteinExistence type="evidence at protein level"/>
<evidence type="ECO:0000250" key="1">
    <source>
        <dbReference type="UniProtKB" id="G4SW86"/>
    </source>
</evidence>
<evidence type="ECO:0000250" key="2">
    <source>
        <dbReference type="UniProtKB" id="Q71KT5"/>
    </source>
</evidence>
<evidence type="ECO:0000250" key="3">
    <source>
        <dbReference type="UniProtKB" id="Q8WMV1"/>
    </source>
</evidence>
<evidence type="ECO:0000255" key="4"/>
<evidence type="ECO:0000269" key="5">
    <source>
    </source>
</evidence>
<evidence type="ECO:0000269" key="6">
    <source>
    </source>
</evidence>
<evidence type="ECO:0000269" key="7">
    <source>
    </source>
</evidence>
<evidence type="ECO:0000269" key="8">
    <source>
    </source>
</evidence>
<evidence type="ECO:0000269" key="9">
    <source>
    </source>
</evidence>
<evidence type="ECO:0000269" key="10">
    <source>
    </source>
</evidence>
<evidence type="ECO:0000303" key="11">
    <source>
    </source>
</evidence>
<evidence type="ECO:0000303" key="12">
    <source>
    </source>
</evidence>
<evidence type="ECO:0000305" key="13"/>
<reference key="1">
    <citation type="journal article" date="1998" name="Genomics">
        <title>Identification and molecular characterization of TM7SF2 in the FAUNA gene cluster on human chromosome 11q13.</title>
        <authorList>
            <person name="Lemmens I.H."/>
            <person name="Kas K."/>
            <person name="Merregaert J."/>
            <person name="Van de Ven W.J.M."/>
        </authorList>
    </citation>
    <scope>NUCLEOTIDE SEQUENCE [GENOMIC DNA / MRNA] (ISOFORM 1)</scope>
    <scope>VARIANT ILE-299</scope>
</reference>
<reference key="2">
    <citation type="journal article" date="1998" name="Genomics">
        <title>The human lamin B receptor/sterol reductase multigene family.</title>
        <authorList>
            <person name="Holmer L."/>
            <person name="Pezhman A."/>
            <person name="Worman H.J."/>
        </authorList>
    </citation>
    <scope>NUCLEOTIDE SEQUENCE [GENOMIC DNA / MRNA] (ISOFORM 1)</scope>
    <scope>VARIANT ILE-299</scope>
    <scope>SUBCELLULAR LOCATION</scope>
    <scope>TISSUE SPECIFICITY</scope>
</reference>
<reference key="3">
    <citation type="journal article" date="2016" name="Elife">
        <title>The Lamin B receptor is essential for cholesterol synthesis and perturbed by disease-causing mutations.</title>
        <authorList>
            <person name="Tsai P.L."/>
            <person name="Zhao C."/>
            <person name="Turner E."/>
            <person name="Schlieker C."/>
        </authorList>
    </citation>
    <scope>NUCLEOTIDE SEQUENCE [MRNA] (ISOFORM 1)</scope>
    <scope>INDUCTION</scope>
</reference>
<reference key="4">
    <citation type="journal article" date="2004" name="Nat. Genet.">
        <title>Complete sequencing and characterization of 21,243 full-length human cDNAs.</title>
        <authorList>
            <person name="Ota T."/>
            <person name="Suzuki Y."/>
            <person name="Nishikawa T."/>
            <person name="Otsuki T."/>
            <person name="Sugiyama T."/>
            <person name="Irie R."/>
            <person name="Wakamatsu A."/>
            <person name="Hayashi K."/>
            <person name="Sato H."/>
            <person name="Nagai K."/>
            <person name="Kimura K."/>
            <person name="Makita H."/>
            <person name="Sekine M."/>
            <person name="Obayashi M."/>
            <person name="Nishi T."/>
            <person name="Shibahara T."/>
            <person name="Tanaka T."/>
            <person name="Ishii S."/>
            <person name="Yamamoto J."/>
            <person name="Saito K."/>
            <person name="Kawai Y."/>
            <person name="Isono Y."/>
            <person name="Nakamura Y."/>
            <person name="Nagahari K."/>
            <person name="Murakami K."/>
            <person name="Yasuda T."/>
            <person name="Iwayanagi T."/>
            <person name="Wagatsuma M."/>
            <person name="Shiratori A."/>
            <person name="Sudo H."/>
            <person name="Hosoiri T."/>
            <person name="Kaku Y."/>
            <person name="Kodaira H."/>
            <person name="Kondo H."/>
            <person name="Sugawara M."/>
            <person name="Takahashi M."/>
            <person name="Kanda K."/>
            <person name="Yokoi T."/>
            <person name="Furuya T."/>
            <person name="Kikkawa E."/>
            <person name="Omura Y."/>
            <person name="Abe K."/>
            <person name="Kamihara K."/>
            <person name="Katsuta N."/>
            <person name="Sato K."/>
            <person name="Tanikawa M."/>
            <person name="Yamazaki M."/>
            <person name="Ninomiya K."/>
            <person name="Ishibashi T."/>
            <person name="Yamashita H."/>
            <person name="Murakawa K."/>
            <person name="Fujimori K."/>
            <person name="Tanai H."/>
            <person name="Kimata M."/>
            <person name="Watanabe M."/>
            <person name="Hiraoka S."/>
            <person name="Chiba Y."/>
            <person name="Ishida S."/>
            <person name="Ono Y."/>
            <person name="Takiguchi S."/>
            <person name="Watanabe S."/>
            <person name="Yosida M."/>
            <person name="Hotuta T."/>
            <person name="Kusano J."/>
            <person name="Kanehori K."/>
            <person name="Takahashi-Fujii A."/>
            <person name="Hara H."/>
            <person name="Tanase T.-O."/>
            <person name="Nomura Y."/>
            <person name="Togiya S."/>
            <person name="Komai F."/>
            <person name="Hara R."/>
            <person name="Takeuchi K."/>
            <person name="Arita M."/>
            <person name="Imose N."/>
            <person name="Musashino K."/>
            <person name="Yuuki H."/>
            <person name="Oshima A."/>
            <person name="Sasaki N."/>
            <person name="Aotsuka S."/>
            <person name="Yoshikawa Y."/>
            <person name="Matsunawa H."/>
            <person name="Ichihara T."/>
            <person name="Shiohata N."/>
            <person name="Sano S."/>
            <person name="Moriya S."/>
            <person name="Momiyama H."/>
            <person name="Satoh N."/>
            <person name="Takami S."/>
            <person name="Terashima Y."/>
            <person name="Suzuki O."/>
            <person name="Nakagawa S."/>
            <person name="Senoh A."/>
            <person name="Mizoguchi H."/>
            <person name="Goto Y."/>
            <person name="Shimizu F."/>
            <person name="Wakebe H."/>
            <person name="Hishigaki H."/>
            <person name="Watanabe T."/>
            <person name="Sugiyama A."/>
            <person name="Takemoto M."/>
            <person name="Kawakami B."/>
            <person name="Yamazaki M."/>
            <person name="Watanabe K."/>
            <person name="Kumagai A."/>
            <person name="Itakura S."/>
            <person name="Fukuzumi Y."/>
            <person name="Fujimori Y."/>
            <person name="Komiyama M."/>
            <person name="Tashiro H."/>
            <person name="Tanigami A."/>
            <person name="Fujiwara T."/>
            <person name="Ono T."/>
            <person name="Yamada K."/>
            <person name="Fujii Y."/>
            <person name="Ozaki K."/>
            <person name="Hirao M."/>
            <person name="Ohmori Y."/>
            <person name="Kawabata A."/>
            <person name="Hikiji T."/>
            <person name="Kobatake N."/>
            <person name="Inagaki H."/>
            <person name="Ikema Y."/>
            <person name="Okamoto S."/>
            <person name="Okitani R."/>
            <person name="Kawakami T."/>
            <person name="Noguchi S."/>
            <person name="Itoh T."/>
            <person name="Shigeta K."/>
            <person name="Senba T."/>
            <person name="Matsumura K."/>
            <person name="Nakajima Y."/>
            <person name="Mizuno T."/>
            <person name="Morinaga M."/>
            <person name="Sasaki M."/>
            <person name="Togashi T."/>
            <person name="Oyama M."/>
            <person name="Hata H."/>
            <person name="Watanabe M."/>
            <person name="Komatsu T."/>
            <person name="Mizushima-Sugano J."/>
            <person name="Satoh T."/>
            <person name="Shirai Y."/>
            <person name="Takahashi Y."/>
            <person name="Nakagawa K."/>
            <person name="Okumura K."/>
            <person name="Nagase T."/>
            <person name="Nomura N."/>
            <person name="Kikuchi H."/>
            <person name="Masuho Y."/>
            <person name="Yamashita R."/>
            <person name="Nakai K."/>
            <person name="Yada T."/>
            <person name="Nakamura Y."/>
            <person name="Ohara O."/>
            <person name="Isogai T."/>
            <person name="Sugano S."/>
        </authorList>
    </citation>
    <scope>NUCLEOTIDE SEQUENCE [LARGE SCALE MRNA] (ISOFORM 1)</scope>
    <scope>VARIANT ILE-299</scope>
    <source>
        <tissue>Ovary</tissue>
    </source>
</reference>
<reference key="5">
    <citation type="journal article" date="2004" name="Genome Res.">
        <title>The status, quality, and expansion of the NIH full-length cDNA project: the Mammalian Gene Collection (MGC).</title>
        <authorList>
            <consortium name="The MGC Project Team"/>
        </authorList>
    </citation>
    <scope>NUCLEOTIDE SEQUENCE [LARGE SCALE MRNA] (ISOFORMS 1 AND 2)</scope>
    <scope>VARIANT ILE-299</scope>
    <source>
        <tissue>Brain</tissue>
        <tissue>Eye</tissue>
        <tissue>Ovary</tissue>
    </source>
</reference>
<reference key="6">
    <citation type="journal article" date="2006" name="Biochim. Biophys. Acta">
        <title>Sterol dependent regulation of human TM7SF2 gene expression: role of the encoded 3beta-hydroxysterol Delta14-reductase in human cholesterol biosynthesis.</title>
        <authorList>
            <person name="Bennati A.M."/>
            <person name="Castelli M."/>
            <person name="Della Fazia M.A."/>
            <person name="Beccari T."/>
            <person name="Caruso D."/>
            <person name="Servillo G."/>
            <person name="Roberti R."/>
        </authorList>
    </citation>
    <scope>FUNCTION</scope>
    <scope>CATALYTIC ACTIVITY</scope>
    <scope>TISSUE SPECIFICITY</scope>
    <scope>INDUCTION</scope>
</reference>
<comment type="function">
    <text evidence="7">Catalyzes the reduction of the C14-unsaturated bond of lanosterol, as part of the metabolic pathway leading to cholesterol biosynthesis.</text>
</comment>
<comment type="catalytic activity">
    <reaction evidence="3">
        <text>4,4-dimethyl-5alpha-cholesta-8,24-dien-3beta-ol + NADP(+) = 4,4-dimethyl-5alpha-cholesta-8,14,24-trien-3beta-ol + NADPH + H(+)</text>
        <dbReference type="Rhea" id="RHEA:18561"/>
        <dbReference type="ChEBI" id="CHEBI:15378"/>
        <dbReference type="ChEBI" id="CHEBI:17813"/>
        <dbReference type="ChEBI" id="CHEBI:18364"/>
        <dbReference type="ChEBI" id="CHEBI:57783"/>
        <dbReference type="ChEBI" id="CHEBI:58349"/>
        <dbReference type="EC" id="1.3.1.70"/>
    </reaction>
</comment>
<comment type="catalytic activity">
    <reaction evidence="7">
        <text>5alpha-cholest-8,14-dien-3beta-ol + NADPH + H(+) = 5alpha-cholest-8-en-3beta-ol + NADP(+)</text>
        <dbReference type="Rhea" id="RHEA:46456"/>
        <dbReference type="ChEBI" id="CHEBI:15378"/>
        <dbReference type="ChEBI" id="CHEBI:16608"/>
        <dbReference type="ChEBI" id="CHEBI:57783"/>
        <dbReference type="ChEBI" id="CHEBI:58349"/>
        <dbReference type="ChEBI" id="CHEBI:86131"/>
    </reaction>
</comment>
<comment type="catalytic activity">
    <reaction evidence="3">
        <text>4,4-dimethyl-8,14-cholestadien-3beta-ol + NADPH + H(+) = 4,4-dimethyl-5alpha-cholest-8-en-3beta-ol + NADP(+)</text>
        <dbReference type="Rhea" id="RHEA:46812"/>
        <dbReference type="ChEBI" id="CHEBI:15378"/>
        <dbReference type="ChEBI" id="CHEBI:57783"/>
        <dbReference type="ChEBI" id="CHEBI:58349"/>
        <dbReference type="ChEBI" id="CHEBI:78904"/>
        <dbReference type="ChEBI" id="CHEBI:87044"/>
    </reaction>
</comment>
<comment type="pathway">
    <text>Steroid biosynthesis; cholesterol biosynthesis.</text>
</comment>
<comment type="interaction">
    <interactant intactId="EBI-2115348">
        <id>O76062</id>
    </interactant>
    <interactant intactId="EBI-3867333">
        <id>A8MQ03</id>
        <label>CYSRT1</label>
    </interactant>
    <organismsDiffer>false</organismsDiffer>
    <experiments>3</experiments>
</comment>
<comment type="interaction">
    <interactant intactId="EBI-2115348">
        <id>O76062</id>
    </interactant>
    <interactant intactId="EBI-11973993">
        <id>Q5TA81</id>
        <label>LCE2C</label>
    </interactant>
    <organismsDiffer>false</organismsDiffer>
    <experiments>3</experiments>
</comment>
<comment type="subcellular location">
    <subcellularLocation>
        <location evidence="2">Microsome membrane</location>
        <topology evidence="4">Multi-pass membrane protein</topology>
    </subcellularLocation>
    <subcellularLocation>
        <location evidence="10">Endoplasmic reticulum membrane</location>
        <topology evidence="4">Multi-pass membrane protein</topology>
    </subcellularLocation>
</comment>
<comment type="alternative products">
    <event type="alternative splicing"/>
    <isoform>
        <id>O76062-1</id>
        <name>1</name>
        <sequence type="displayed"/>
    </isoform>
    <isoform>
        <id>O76062-2</id>
        <name>2</name>
        <sequence type="described" ref="VSP_017898"/>
    </isoform>
</comment>
<comment type="tissue specificity">
    <text evidence="7 10">Expressed in adult heart, brain, pancreas, lung, liver, skeletal muscle, kidney, ovary, prostate, testis and adrenal gland, but not detected in placenta, spleen, thymus, small intestine, colon (mucosal lining), or peripheral blood leukocytes.</text>
</comment>
<comment type="induction">
    <text evidence="7 8">By sterol starvation.</text>
</comment>
<comment type="similarity">
    <text evidence="13">Belongs to the ERG4/ERG24 family.</text>
</comment>
<comment type="sequence caution" evidence="13">
    <conflict type="miscellaneous discrepancy">
        <sequence resource="EMBL-CDS" id="AAC21450"/>
    </conflict>
    <text>Sequencing errors.</text>
</comment>
<comment type="sequence caution" evidence="13">
    <conflict type="miscellaneous discrepancy">
        <sequence resource="EMBL-CDS" id="AAC21457"/>
    </conflict>
    <text>Sequencing errors.</text>
</comment>
<organism>
    <name type="scientific">Homo sapiens</name>
    <name type="common">Human</name>
    <dbReference type="NCBI Taxonomy" id="9606"/>
    <lineage>
        <taxon>Eukaryota</taxon>
        <taxon>Metazoa</taxon>
        <taxon>Chordata</taxon>
        <taxon>Craniata</taxon>
        <taxon>Vertebrata</taxon>
        <taxon>Euteleostomi</taxon>
        <taxon>Mammalia</taxon>
        <taxon>Eutheria</taxon>
        <taxon>Euarchontoglires</taxon>
        <taxon>Primates</taxon>
        <taxon>Haplorrhini</taxon>
        <taxon>Catarrhini</taxon>
        <taxon>Hominidae</taxon>
        <taxon>Homo</taxon>
    </lineage>
</organism>
<accession>O76062</accession>
<accession>A8K4H0</accession>
<accession>O95982</accession>
<accession>Q8IY06</accession>
<accession>Q96E64</accession>
<accession>Q96GZ1</accession>
<keyword id="KW-0025">Alternative splicing</keyword>
<keyword id="KW-0152">Cholesterol biosynthesis</keyword>
<keyword id="KW-0153">Cholesterol metabolism</keyword>
<keyword id="KW-0256">Endoplasmic reticulum</keyword>
<keyword id="KW-0444">Lipid biosynthesis</keyword>
<keyword id="KW-0443">Lipid metabolism</keyword>
<keyword id="KW-0472">Membrane</keyword>
<keyword id="KW-0492">Microsome</keyword>
<keyword id="KW-0521">NADP</keyword>
<keyword id="KW-0560">Oxidoreductase</keyword>
<keyword id="KW-1267">Proteomics identification</keyword>
<keyword id="KW-1185">Reference proteome</keyword>
<keyword id="KW-0752">Steroid biosynthesis</keyword>
<keyword id="KW-0753">Steroid metabolism</keyword>
<keyword id="KW-0756">Sterol biosynthesis</keyword>
<keyword id="KW-1207">Sterol metabolism</keyword>
<keyword id="KW-0812">Transmembrane</keyword>
<keyword id="KW-1133">Transmembrane helix</keyword>